<sequence>MDKFLIKMPIKHKNNETPEQKPIVKKETPKAAAKQSNKNTPIQAKEKENAQNDTPKQGRAGRSAKPAAKRKNLDTLEVNTEKNTAESENPPKRRSGRLTRSTRSMAEEGTPSPEKVKPEKLPFIKYRGAIKYFTENQDIAASADDVMQWVDKQTDVDVVPMAFDMEWPFSFQTGPGKSSVIQICVDEKCCYVYQLTNLKKLPAALVALINHPKVRLHGVNIKADFRKLQRDFPEVSADALIEKCVDLGVWCNEICETGGRWSLERLANFIAKKAMDKSKKVRMSKWHVIPLDENQLMYAAIDVYIGQVIYRDLEQREKQKLINELQFKEQNGEAAFKAVKGLGETFLSKINEITL</sequence>
<reference evidence="6" key="1">
    <citation type="journal article" date="2007" name="Nature">
        <title>Evolution of genes and genomes on the Drosophila phylogeny.</title>
        <authorList>
            <consortium name="Drosophila 12 genomes consortium"/>
        </authorList>
    </citation>
    <scope>NUCLEOTIDE SEQUENCE [LARGE SCALE GENOMIC DNA]</scope>
    <source>
        <strain evidence="6">MSH-3 / Tucson 14011-0111.49</strain>
    </source>
</reference>
<name>WRNXO_DROPE</name>
<comment type="function">
    <text evidence="2">Has exonuclease activity on both single-stranded and duplex templates bearing overhangs, but not blunt ended duplex DNA, and cleaves in a 3'-5' direction. Essential for the formation of DNA replication focal centers. Has an important role in maintaining genome stability.</text>
</comment>
<comment type="subcellular location">
    <subcellularLocation>
        <location evidence="2">Nucleus</location>
    </subcellularLocation>
</comment>
<comment type="similarity">
    <text evidence="5">Belongs to the WRNexo family.</text>
</comment>
<comment type="sequence caution" evidence="5">
    <conflict type="erroneous initiation">
        <sequence resource="EMBL-CDS" id="EDW24795"/>
    </conflict>
    <text>Truncated N-terminus.</text>
</comment>
<organism>
    <name type="scientific">Drosophila persimilis</name>
    <name type="common">Fruit fly</name>
    <dbReference type="NCBI Taxonomy" id="7234"/>
    <lineage>
        <taxon>Eukaryota</taxon>
        <taxon>Metazoa</taxon>
        <taxon>Ecdysozoa</taxon>
        <taxon>Arthropoda</taxon>
        <taxon>Hexapoda</taxon>
        <taxon>Insecta</taxon>
        <taxon>Pterygota</taxon>
        <taxon>Neoptera</taxon>
        <taxon>Endopterygota</taxon>
        <taxon>Diptera</taxon>
        <taxon>Brachycera</taxon>
        <taxon>Muscomorpha</taxon>
        <taxon>Ephydroidea</taxon>
        <taxon>Drosophilidae</taxon>
        <taxon>Drosophila</taxon>
        <taxon>Sophophora</taxon>
    </lineage>
</organism>
<gene>
    <name evidence="2" type="primary">WRNexo</name>
    <name type="ORF">GL23198</name>
</gene>
<keyword id="KW-0269">Exonuclease</keyword>
<keyword id="KW-0378">Hydrolase</keyword>
<keyword id="KW-0460">Magnesium</keyword>
<keyword id="KW-0479">Metal-binding</keyword>
<keyword id="KW-0540">Nuclease</keyword>
<keyword id="KW-0539">Nucleus</keyword>
<keyword id="KW-0597">Phosphoprotein</keyword>
<keyword id="KW-1185">Reference proteome</keyword>
<protein>
    <recommendedName>
        <fullName evidence="2">3'-5' exonuclease</fullName>
        <ecNumber>3.1.11.-</ecNumber>
    </recommendedName>
    <alternativeName>
        <fullName>Werner Syndrome-like exonuclease</fullName>
    </alternativeName>
</protein>
<accession>B4G5C9</accession>
<proteinExistence type="inferred from homology"/>
<feature type="chain" id="PRO_0000399378" description="3'-5' exonuclease">
    <location>
        <begin position="1"/>
        <end position="355"/>
    </location>
</feature>
<feature type="domain" description="3'-5' exonuclease" evidence="3">
    <location>
        <begin position="154"/>
        <end position="315"/>
    </location>
</feature>
<feature type="region of interest" description="Disordered" evidence="4">
    <location>
        <begin position="1"/>
        <end position="119"/>
    </location>
</feature>
<feature type="compositionally biased region" description="Basic and acidic residues" evidence="4">
    <location>
        <begin position="13"/>
        <end position="29"/>
    </location>
</feature>
<feature type="compositionally biased region" description="Basic and acidic residues" evidence="4">
    <location>
        <begin position="71"/>
        <end position="91"/>
    </location>
</feature>
<feature type="binding site" evidence="2">
    <location>
        <position position="164"/>
    </location>
    <ligand>
        <name>Mg(2+)</name>
        <dbReference type="ChEBI" id="CHEBI:18420"/>
        <label>1</label>
        <note>catalytic</note>
    </ligand>
</feature>
<feature type="binding site" evidence="2">
    <location>
        <position position="164"/>
    </location>
    <ligand>
        <name>Mg(2+)</name>
        <dbReference type="ChEBI" id="CHEBI:18420"/>
        <label>2</label>
        <note>catalytic</note>
    </ligand>
</feature>
<feature type="binding site" evidence="2">
    <location>
        <position position="166"/>
    </location>
    <ligand>
        <name>Mg(2+)</name>
        <dbReference type="ChEBI" id="CHEBI:18420"/>
        <label>1</label>
        <note>catalytic</note>
    </ligand>
</feature>
<feature type="binding site" evidence="1">
    <location>
        <position position="302"/>
    </location>
    <ligand>
        <name>Mg(2+)</name>
        <dbReference type="ChEBI" id="CHEBI:18420"/>
        <label>1</label>
        <note>catalytic</note>
    </ligand>
</feature>
<feature type="modified residue" description="Phosphoserine" evidence="2">
    <location>
        <position position="104"/>
    </location>
</feature>
<feature type="modified residue" description="Phosphoserine" evidence="2">
    <location>
        <position position="112"/>
    </location>
</feature>
<evidence type="ECO:0000250" key="1">
    <source>
        <dbReference type="UniProtKB" id="Q14191"/>
    </source>
</evidence>
<evidence type="ECO:0000250" key="2">
    <source>
        <dbReference type="UniProtKB" id="Q9VE86"/>
    </source>
</evidence>
<evidence type="ECO:0000255" key="3"/>
<evidence type="ECO:0000256" key="4">
    <source>
        <dbReference type="SAM" id="MobiDB-lite"/>
    </source>
</evidence>
<evidence type="ECO:0000305" key="5"/>
<evidence type="ECO:0000312" key="6">
    <source>
        <dbReference type="EMBL" id="EDW24795.1"/>
    </source>
</evidence>
<dbReference type="EC" id="3.1.11.-"/>
<dbReference type="EMBL" id="CH479179">
    <property type="protein sequence ID" value="EDW24795.1"/>
    <property type="status" value="ALT_INIT"/>
    <property type="molecule type" value="Genomic_DNA"/>
</dbReference>
<dbReference type="RefSeq" id="XP_002013809.1">
    <property type="nucleotide sequence ID" value="XM_002013773.1"/>
</dbReference>
<dbReference type="SMR" id="B4G5C9"/>
<dbReference type="STRING" id="7234.B4G5C9"/>
<dbReference type="EnsemblMetazoa" id="FBtr0188813">
    <property type="protein sequence ID" value="FBpp0187305"/>
    <property type="gene ID" value="FBgn0160788"/>
</dbReference>
<dbReference type="EnsemblMetazoa" id="XM_002013773.2">
    <property type="protein sequence ID" value="XP_002013809.2"/>
    <property type="gene ID" value="LOC6588337"/>
</dbReference>
<dbReference type="GeneID" id="6588337"/>
<dbReference type="KEGG" id="dpe:6588337"/>
<dbReference type="eggNOG" id="KOG4373">
    <property type="taxonomic scope" value="Eukaryota"/>
</dbReference>
<dbReference type="OrthoDB" id="10261556at2759"/>
<dbReference type="ChiTaRS" id="WRNexo">
    <property type="organism name" value="fly"/>
</dbReference>
<dbReference type="Proteomes" id="UP000008744">
    <property type="component" value="Unassembled WGS sequence"/>
</dbReference>
<dbReference type="GO" id="GO:0005634">
    <property type="term" value="C:nucleus"/>
    <property type="evidence" value="ECO:0000250"/>
    <property type="project" value="UniProtKB"/>
</dbReference>
<dbReference type="GO" id="GO:0008408">
    <property type="term" value="F:3'-5' exonuclease activity"/>
    <property type="evidence" value="ECO:0000250"/>
    <property type="project" value="UniProtKB"/>
</dbReference>
<dbReference type="GO" id="GO:0046872">
    <property type="term" value="F:metal ion binding"/>
    <property type="evidence" value="ECO:0007669"/>
    <property type="project" value="UniProtKB-KW"/>
</dbReference>
<dbReference type="GO" id="GO:0003676">
    <property type="term" value="F:nucleic acid binding"/>
    <property type="evidence" value="ECO:0007669"/>
    <property type="project" value="InterPro"/>
</dbReference>
<dbReference type="GO" id="GO:0045950">
    <property type="term" value="P:negative regulation of mitotic recombination"/>
    <property type="evidence" value="ECO:0000250"/>
    <property type="project" value="UniProtKB"/>
</dbReference>
<dbReference type="GO" id="GO:0006139">
    <property type="term" value="P:nucleobase-containing compound metabolic process"/>
    <property type="evidence" value="ECO:0007669"/>
    <property type="project" value="InterPro"/>
</dbReference>
<dbReference type="CDD" id="cd06141">
    <property type="entry name" value="WRN_exo"/>
    <property type="match status" value="1"/>
</dbReference>
<dbReference type="FunFam" id="3.30.420.10:FF:000104">
    <property type="entry name" value="Werner Syndrome-like exonuclease"/>
    <property type="match status" value="1"/>
</dbReference>
<dbReference type="Gene3D" id="3.30.420.10">
    <property type="entry name" value="Ribonuclease H-like superfamily/Ribonuclease H"/>
    <property type="match status" value="1"/>
</dbReference>
<dbReference type="InterPro" id="IPR002562">
    <property type="entry name" value="3'-5'_exonuclease_dom"/>
</dbReference>
<dbReference type="InterPro" id="IPR051132">
    <property type="entry name" value="3-5_Exonuclease_domain"/>
</dbReference>
<dbReference type="InterPro" id="IPR012337">
    <property type="entry name" value="RNaseH-like_sf"/>
</dbReference>
<dbReference type="InterPro" id="IPR036397">
    <property type="entry name" value="RNaseH_sf"/>
</dbReference>
<dbReference type="PANTHER" id="PTHR13620:SF109">
    <property type="entry name" value="3'-5' EXONUCLEASE"/>
    <property type="match status" value="1"/>
</dbReference>
<dbReference type="PANTHER" id="PTHR13620">
    <property type="entry name" value="3-5 EXONUCLEASE"/>
    <property type="match status" value="1"/>
</dbReference>
<dbReference type="Pfam" id="PF01612">
    <property type="entry name" value="DNA_pol_A_exo1"/>
    <property type="match status" value="1"/>
</dbReference>
<dbReference type="SMART" id="SM00474">
    <property type="entry name" value="35EXOc"/>
    <property type="match status" value="1"/>
</dbReference>
<dbReference type="SUPFAM" id="SSF53098">
    <property type="entry name" value="Ribonuclease H-like"/>
    <property type="match status" value="1"/>
</dbReference>